<sequence>MTKDGGKKDNQGQDKKAQQYGVTPQSVDFNDWYNEVVKKADLADNSPVAGAMVVRPYGSALWENIQRWLDDRFKASGHESLIFPTLIPMNFIMKEADHVEGFAPELFTVNKIGTEELAEPYVMRPTSETIIGHMWSGWLNSYRDLPFLHYQWGSVFRAELRTKAFLRTSEFFWHEGHTAHADEAEARAEVRQQLDLYHEFCRDVLALPVVRGEKTASERFAGAVATYSIEGMMRDGKALQSGTSHYLGQNFSRAFDVKYQTREQKEEFAHTTSWAISSRIIGAIIMTHGDDSGLMMPPRIAPIQVVVIPVGRKDNFDQMVQEGEKLAAELRAQGLRVKVDGRDGVTNGFKYNDWELKGVPVRIELGPRDLESGVLVVKNRHSEDKETLPRAEAVSGMSARLDTIHDFLMKRATDFLLANTAEVDSYDAFQREIEAGHWVRAYHCGEPACEKSIKEDTKATARNVPFDDAEFFAERGEGQCVKCGQPSAYGKRVLFGRQY</sequence>
<accession>Q9RUW4</accession>
<reference key="1">
    <citation type="journal article" date="1999" name="Science">
        <title>Genome sequence of the radioresistant bacterium Deinococcus radiodurans R1.</title>
        <authorList>
            <person name="White O."/>
            <person name="Eisen J.A."/>
            <person name="Heidelberg J.F."/>
            <person name="Hickey E.K."/>
            <person name="Peterson J.D."/>
            <person name="Dodson R.J."/>
            <person name="Haft D.H."/>
            <person name="Gwinn M.L."/>
            <person name="Nelson W.C."/>
            <person name="Richardson D.L."/>
            <person name="Moffat K.S."/>
            <person name="Qin H."/>
            <person name="Jiang L."/>
            <person name="Pamphile W."/>
            <person name="Crosby M."/>
            <person name="Shen M."/>
            <person name="Vamathevan J.J."/>
            <person name="Lam P."/>
            <person name="McDonald L.A."/>
            <person name="Utterback T.R."/>
            <person name="Zalewski C."/>
            <person name="Makarova K.S."/>
            <person name="Aravind L."/>
            <person name="Daly M.J."/>
            <person name="Minton K.W."/>
            <person name="Fleischmann R.D."/>
            <person name="Ketchum K.A."/>
            <person name="Nelson K.E."/>
            <person name="Salzberg S.L."/>
            <person name="Smith H.O."/>
            <person name="Venter J.C."/>
            <person name="Fraser C.M."/>
        </authorList>
    </citation>
    <scope>NUCLEOTIDE SEQUENCE [LARGE SCALE GENOMIC DNA]</scope>
    <source>
        <strain>ATCC 13939 / DSM 20539 / JCM 16871 / CCUG 27074 / LMG 4051 / NBRC 15346 / NCIMB 9279 / VKM B-1422 / R1</strain>
    </source>
</reference>
<reference key="2">
    <citation type="journal article" date="2002" name="J. Biol. Chem.">
        <title>Cysteine activation is an inherent in vitro property of prolyl-tRNA synthetases.</title>
        <authorList>
            <person name="Ahel I."/>
            <person name="Stathopoulos C."/>
            <person name="Ambrogelly A."/>
            <person name="Sauerwald A."/>
            <person name="Toogood H."/>
            <person name="Hartsch T."/>
            <person name="Soell D."/>
        </authorList>
    </citation>
    <scope>PROLINE AND CYSTEINE ACTIVATION</scope>
    <scope>KINETIC PARAMETERS</scope>
</reference>
<protein>
    <recommendedName>
        <fullName>Proline--tRNA ligase</fullName>
        <ecNumber>6.1.1.15</ecNumber>
    </recommendedName>
    <alternativeName>
        <fullName>Prolyl-tRNA synthetase</fullName>
        <shortName>ProRS</shortName>
    </alternativeName>
</protein>
<feature type="chain" id="PRO_0000248228" description="Proline--tRNA ligase">
    <location>
        <begin position="1"/>
        <end position="499"/>
    </location>
</feature>
<feature type="region of interest" description="Disordered" evidence="2">
    <location>
        <begin position="1"/>
        <end position="21"/>
    </location>
</feature>
<feature type="compositionally biased region" description="Basic and acidic residues" evidence="2">
    <location>
        <begin position="1"/>
        <end position="17"/>
    </location>
</feature>
<evidence type="ECO:0000250" key="1"/>
<evidence type="ECO:0000256" key="2">
    <source>
        <dbReference type="SAM" id="MobiDB-lite"/>
    </source>
</evidence>
<evidence type="ECO:0000269" key="3">
    <source>
    </source>
</evidence>
<evidence type="ECO:0000305" key="4"/>
<name>SYP_DEIRA</name>
<dbReference type="EC" id="6.1.1.15"/>
<dbReference type="EMBL" id="AE000513">
    <property type="protein sequence ID" value="AAF10837.1"/>
    <property type="molecule type" value="Genomic_DNA"/>
</dbReference>
<dbReference type="PIR" id="D75416">
    <property type="entry name" value="D75416"/>
</dbReference>
<dbReference type="RefSeq" id="NP_294990.1">
    <property type="nucleotide sequence ID" value="NC_001263.1"/>
</dbReference>
<dbReference type="RefSeq" id="WP_010887909.1">
    <property type="nucleotide sequence ID" value="NC_001263.1"/>
</dbReference>
<dbReference type="SMR" id="Q9RUW4"/>
<dbReference type="STRING" id="243230.DR_1266"/>
<dbReference type="PaxDb" id="243230-DR_1266"/>
<dbReference type="EnsemblBacteria" id="AAF10837">
    <property type="protein sequence ID" value="AAF10837"/>
    <property type="gene ID" value="DR_1266"/>
</dbReference>
<dbReference type="GeneID" id="69517513"/>
<dbReference type="KEGG" id="dra:DR_1266"/>
<dbReference type="PATRIC" id="fig|243230.17.peg.1460"/>
<dbReference type="eggNOG" id="COG0442">
    <property type="taxonomic scope" value="Bacteria"/>
</dbReference>
<dbReference type="HOGENOM" id="CLU_001882_4_2_0"/>
<dbReference type="InParanoid" id="Q9RUW4"/>
<dbReference type="OrthoDB" id="9809052at2"/>
<dbReference type="SABIO-RK" id="Q9RUW4"/>
<dbReference type="Proteomes" id="UP000002524">
    <property type="component" value="Chromosome 1"/>
</dbReference>
<dbReference type="GO" id="GO:0017101">
    <property type="term" value="C:aminoacyl-tRNA synthetase multienzyme complex"/>
    <property type="evidence" value="ECO:0000318"/>
    <property type="project" value="GO_Central"/>
</dbReference>
<dbReference type="GO" id="GO:0005737">
    <property type="term" value="C:cytoplasm"/>
    <property type="evidence" value="ECO:0000318"/>
    <property type="project" value="GO_Central"/>
</dbReference>
<dbReference type="GO" id="GO:0005524">
    <property type="term" value="F:ATP binding"/>
    <property type="evidence" value="ECO:0007669"/>
    <property type="project" value="UniProtKB-UniRule"/>
</dbReference>
<dbReference type="GO" id="GO:0004827">
    <property type="term" value="F:proline-tRNA ligase activity"/>
    <property type="evidence" value="ECO:0000318"/>
    <property type="project" value="GO_Central"/>
</dbReference>
<dbReference type="GO" id="GO:0006433">
    <property type="term" value="P:prolyl-tRNA aminoacylation"/>
    <property type="evidence" value="ECO:0000318"/>
    <property type="project" value="GO_Central"/>
</dbReference>
<dbReference type="CDD" id="cd00862">
    <property type="entry name" value="ProRS_anticodon_zinc"/>
    <property type="match status" value="1"/>
</dbReference>
<dbReference type="CDD" id="cd00778">
    <property type="entry name" value="ProRS_core_arch_euk"/>
    <property type="match status" value="1"/>
</dbReference>
<dbReference type="FunFam" id="3.40.50.800:FF:000005">
    <property type="entry name" value="bifunctional glutamate/proline--tRNA ligase"/>
    <property type="match status" value="1"/>
</dbReference>
<dbReference type="FunFam" id="3.30.930.10:FF:000023">
    <property type="entry name" value="Proline--tRNA ligase"/>
    <property type="match status" value="1"/>
</dbReference>
<dbReference type="Gene3D" id="3.40.50.800">
    <property type="entry name" value="Anticodon-binding domain"/>
    <property type="match status" value="1"/>
</dbReference>
<dbReference type="Gene3D" id="3.30.930.10">
    <property type="entry name" value="Bira Bifunctional Protein, Domain 2"/>
    <property type="match status" value="1"/>
</dbReference>
<dbReference type="Gene3D" id="3.30.110.30">
    <property type="entry name" value="C-terminal domain of ProRS"/>
    <property type="match status" value="1"/>
</dbReference>
<dbReference type="HAMAP" id="MF_01571">
    <property type="entry name" value="Pro_tRNA_synth_type3"/>
    <property type="match status" value="1"/>
</dbReference>
<dbReference type="InterPro" id="IPR002314">
    <property type="entry name" value="aa-tRNA-synt_IIb"/>
</dbReference>
<dbReference type="InterPro" id="IPR006195">
    <property type="entry name" value="aa-tRNA-synth_II"/>
</dbReference>
<dbReference type="InterPro" id="IPR045864">
    <property type="entry name" value="aa-tRNA-synth_II/BPL/LPL"/>
</dbReference>
<dbReference type="InterPro" id="IPR004154">
    <property type="entry name" value="Anticodon-bd"/>
</dbReference>
<dbReference type="InterPro" id="IPR036621">
    <property type="entry name" value="Anticodon-bd_dom_sf"/>
</dbReference>
<dbReference type="InterPro" id="IPR002316">
    <property type="entry name" value="Pro-tRNA-ligase_IIa"/>
</dbReference>
<dbReference type="InterPro" id="IPR004499">
    <property type="entry name" value="Pro-tRNA-ligase_IIa_arc-type"/>
</dbReference>
<dbReference type="InterPro" id="IPR016061">
    <property type="entry name" value="Pro-tRNA_ligase_II_C"/>
</dbReference>
<dbReference type="InterPro" id="IPR017449">
    <property type="entry name" value="Pro-tRNA_synth_II"/>
</dbReference>
<dbReference type="InterPro" id="IPR033721">
    <property type="entry name" value="ProRS_core_arch_euk"/>
</dbReference>
<dbReference type="NCBIfam" id="TIGR00408">
    <property type="entry name" value="proS_fam_I"/>
    <property type="match status" value="1"/>
</dbReference>
<dbReference type="PANTHER" id="PTHR43382:SF2">
    <property type="entry name" value="BIFUNCTIONAL GLUTAMATE_PROLINE--TRNA LIGASE"/>
    <property type="match status" value="1"/>
</dbReference>
<dbReference type="PANTHER" id="PTHR43382">
    <property type="entry name" value="PROLYL-TRNA SYNTHETASE"/>
    <property type="match status" value="1"/>
</dbReference>
<dbReference type="Pfam" id="PF03129">
    <property type="entry name" value="HGTP_anticodon"/>
    <property type="match status" value="1"/>
</dbReference>
<dbReference type="Pfam" id="PF09180">
    <property type="entry name" value="ProRS-C_1"/>
    <property type="match status" value="1"/>
</dbReference>
<dbReference type="Pfam" id="PF00587">
    <property type="entry name" value="tRNA-synt_2b"/>
    <property type="match status" value="1"/>
</dbReference>
<dbReference type="PRINTS" id="PR01046">
    <property type="entry name" value="TRNASYNTHPRO"/>
</dbReference>
<dbReference type="SMART" id="SM00946">
    <property type="entry name" value="ProRS-C_1"/>
    <property type="match status" value="1"/>
</dbReference>
<dbReference type="SUPFAM" id="SSF64586">
    <property type="entry name" value="C-terminal domain of ProRS"/>
    <property type="match status" value="1"/>
</dbReference>
<dbReference type="SUPFAM" id="SSF52954">
    <property type="entry name" value="Class II aaRS ABD-related"/>
    <property type="match status" value="1"/>
</dbReference>
<dbReference type="SUPFAM" id="SSF55681">
    <property type="entry name" value="Class II aaRS and biotin synthetases"/>
    <property type="match status" value="1"/>
</dbReference>
<dbReference type="PROSITE" id="PS50862">
    <property type="entry name" value="AA_TRNA_LIGASE_II"/>
    <property type="match status" value="1"/>
</dbReference>
<comment type="function">
    <text>Catalyzes the attachment of proline to tRNA(Pro) in a two-step reaction: proline is first activated by ATP to form Pro-AMP and then transferred to the acceptor end of tRNA(Pro). Can inadvertently accommodate and process cysteine.</text>
</comment>
<comment type="catalytic activity">
    <reaction>
        <text>tRNA(Pro) + L-proline + ATP = L-prolyl-tRNA(Pro) + AMP + diphosphate</text>
        <dbReference type="Rhea" id="RHEA:14305"/>
        <dbReference type="Rhea" id="RHEA-COMP:9700"/>
        <dbReference type="Rhea" id="RHEA-COMP:9702"/>
        <dbReference type="ChEBI" id="CHEBI:30616"/>
        <dbReference type="ChEBI" id="CHEBI:33019"/>
        <dbReference type="ChEBI" id="CHEBI:60039"/>
        <dbReference type="ChEBI" id="CHEBI:78442"/>
        <dbReference type="ChEBI" id="CHEBI:78532"/>
        <dbReference type="ChEBI" id="CHEBI:456215"/>
        <dbReference type="EC" id="6.1.1.15"/>
    </reaction>
</comment>
<comment type="biophysicochemical properties">
    <kinetics>
        <KM evidence="3">0.16 mM for proline</KM>
        <KM evidence="3">0.01 mM for cysteine</KM>
    </kinetics>
</comment>
<comment type="subunit">
    <text evidence="1">Homodimer.</text>
</comment>
<comment type="subcellular location">
    <subcellularLocation>
        <location evidence="1">Cytoplasm</location>
    </subcellularLocation>
</comment>
<comment type="domain">
    <text evidence="1">Consists of three domains: the N-terminal catalytic domain, the anticodon-binding domain and the C-terminal extension.</text>
</comment>
<comment type="similarity">
    <text evidence="4">Belongs to the class-II aminoacyl-tRNA synthetase family. ProS type 3 subfamily.</text>
</comment>
<organism>
    <name type="scientific">Deinococcus radiodurans (strain ATCC 13939 / DSM 20539 / JCM 16871 / CCUG 27074 / LMG 4051 / NBRC 15346 / NCIMB 9279 / VKM B-1422 / R1)</name>
    <dbReference type="NCBI Taxonomy" id="243230"/>
    <lineage>
        <taxon>Bacteria</taxon>
        <taxon>Thermotogati</taxon>
        <taxon>Deinococcota</taxon>
        <taxon>Deinococci</taxon>
        <taxon>Deinococcales</taxon>
        <taxon>Deinococcaceae</taxon>
        <taxon>Deinococcus</taxon>
    </lineage>
</organism>
<gene>
    <name type="primary">proS</name>
    <name type="ordered locus">DR_1266</name>
</gene>
<proteinExistence type="evidence at protein level"/>
<keyword id="KW-0030">Aminoacyl-tRNA synthetase</keyword>
<keyword id="KW-0067">ATP-binding</keyword>
<keyword id="KW-0963">Cytoplasm</keyword>
<keyword id="KW-0436">Ligase</keyword>
<keyword id="KW-0547">Nucleotide-binding</keyword>
<keyword id="KW-0648">Protein biosynthesis</keyword>
<keyword id="KW-1185">Reference proteome</keyword>